<gene>
    <name type="ordered locus">BQ2027_MB2921C</name>
</gene>
<comment type="similarity">
    <text evidence="1">Belongs to the Mg-chelatase subunits D/I family. ComM subfamily.</text>
</comment>
<sequence>MALGRAFSVAVRGLDGEIVEIEADITSGLPGVHLVGLPDAALQESRDRVRAAVTNCGNSWPMARLTLALSPATLPKMGSVYDIALAAAVLSAQQKKPWERLENTLLLGELSLDGRVRPVRGVLPAVLAAKRDGWPAVVVPADNLPEASLVDGIDVRGVRTLGQLQSWLRGSTGLAGRITTADTTPESAADLADVVGQSQARFAVEVAAAGAHHLMLTGPPGVGKTMLAQRLPGLLPSLSGSESLEVTAIHSVAGLLSGDTPLITRPPFVAPHHSSSVAALVGGGSGMARPGAVSRAHRGVLFLDECAEISLSALEALRTPLEDGEIRLARRDGVACYPARFQLVLAANPCPCAPADPQDCICAAATKRRYLGKLSGPLLDRVDLRVQMHRLRAGAFSAADGESTSQVRQRVALAREAAAQRWRPHGFRTNAEVSGPLLRRKFRPSSAAMLPLRTALDRGLLSIRGVDRTLRVAWSLADLAGRTSPGIDEVAAALSFRQTGARR</sequence>
<reference key="1">
    <citation type="journal article" date="2003" name="Proc. Natl. Acad. Sci. U.S.A.">
        <title>The complete genome sequence of Mycobacterium bovis.</title>
        <authorList>
            <person name="Garnier T."/>
            <person name="Eiglmeier K."/>
            <person name="Camus J.-C."/>
            <person name="Medina N."/>
            <person name="Mansoor H."/>
            <person name="Pryor M."/>
            <person name="Duthoy S."/>
            <person name="Grondin S."/>
            <person name="Lacroix C."/>
            <person name="Monsempe C."/>
            <person name="Simon S."/>
            <person name="Harris B."/>
            <person name="Atkin R."/>
            <person name="Doggett J."/>
            <person name="Mayes R."/>
            <person name="Keating L."/>
            <person name="Wheeler P.R."/>
            <person name="Parkhill J."/>
            <person name="Barrell B.G."/>
            <person name="Cole S.T."/>
            <person name="Gordon S.V."/>
            <person name="Hewinson R.G."/>
        </authorList>
    </citation>
    <scope>NUCLEOTIDE SEQUENCE [LARGE SCALE GENOMIC DNA]</scope>
    <source>
        <strain>ATCC BAA-935 / AF2122/97</strain>
    </source>
</reference>
<reference key="2">
    <citation type="journal article" date="2017" name="Genome Announc.">
        <title>Updated reference genome sequence and annotation of Mycobacterium bovis AF2122/97.</title>
        <authorList>
            <person name="Malone K.M."/>
            <person name="Farrell D."/>
            <person name="Stuber T.P."/>
            <person name="Schubert O.T."/>
            <person name="Aebersold R."/>
            <person name="Robbe-Austerman S."/>
            <person name="Gordon S.V."/>
        </authorList>
    </citation>
    <scope>NUCLEOTIDE SEQUENCE [LARGE SCALE GENOMIC DNA]</scope>
    <scope>GENOME REANNOTATION</scope>
    <source>
        <strain>ATCC BAA-935 / AF2122/97</strain>
    </source>
</reference>
<dbReference type="EMBL" id="LT708304">
    <property type="protein sequence ID" value="SIU01542.1"/>
    <property type="molecule type" value="Genomic_DNA"/>
</dbReference>
<dbReference type="RefSeq" id="NP_856566.1">
    <property type="nucleotide sequence ID" value="NC_002945.3"/>
</dbReference>
<dbReference type="RefSeq" id="WP_003414700.1">
    <property type="nucleotide sequence ID" value="NC_002945.4"/>
</dbReference>
<dbReference type="SMR" id="P68908"/>
<dbReference type="KEGG" id="mbo:BQ2027_MB2921C"/>
<dbReference type="PATRIC" id="fig|233413.5.peg.3207"/>
<dbReference type="Proteomes" id="UP000001419">
    <property type="component" value="Chromosome"/>
</dbReference>
<dbReference type="GO" id="GO:0005524">
    <property type="term" value="F:ATP binding"/>
    <property type="evidence" value="ECO:0007669"/>
    <property type="project" value="InterPro"/>
</dbReference>
<dbReference type="GO" id="GO:0016887">
    <property type="term" value="F:ATP hydrolysis activity"/>
    <property type="evidence" value="ECO:0007669"/>
    <property type="project" value="InterPro"/>
</dbReference>
<dbReference type="CDD" id="cd00009">
    <property type="entry name" value="AAA"/>
    <property type="match status" value="1"/>
</dbReference>
<dbReference type="FunFam" id="3.30.230.10:FF:000048">
    <property type="entry name" value="AAA family ATPase"/>
    <property type="match status" value="1"/>
</dbReference>
<dbReference type="FunFam" id="3.40.50.300:FF:001969">
    <property type="entry name" value="Putative magnesium chelatase"/>
    <property type="match status" value="1"/>
</dbReference>
<dbReference type="Gene3D" id="3.30.230.10">
    <property type="match status" value="1"/>
</dbReference>
<dbReference type="Gene3D" id="3.40.50.300">
    <property type="entry name" value="P-loop containing nucleotide triphosphate hydrolases"/>
    <property type="match status" value="1"/>
</dbReference>
<dbReference type="InterPro" id="IPR003593">
    <property type="entry name" value="AAA+_ATPase"/>
</dbReference>
<dbReference type="InterPro" id="IPR045006">
    <property type="entry name" value="CHLI-like"/>
</dbReference>
<dbReference type="InterPro" id="IPR004482">
    <property type="entry name" value="Mg_chelat-rel"/>
</dbReference>
<dbReference type="InterPro" id="IPR025158">
    <property type="entry name" value="Mg_chelat-rel_C"/>
</dbReference>
<dbReference type="InterPro" id="IPR000523">
    <property type="entry name" value="Mg_chelatse_chII-like_cat_dom"/>
</dbReference>
<dbReference type="InterPro" id="IPR027417">
    <property type="entry name" value="P-loop_NTPase"/>
</dbReference>
<dbReference type="InterPro" id="IPR020568">
    <property type="entry name" value="Ribosomal_Su5_D2-typ_SF"/>
</dbReference>
<dbReference type="InterPro" id="IPR014721">
    <property type="entry name" value="Ribsml_uS5_D2-typ_fold_subgr"/>
</dbReference>
<dbReference type="NCBIfam" id="TIGR00368">
    <property type="entry name" value="YifB family Mg chelatase-like AAA ATPase"/>
    <property type="match status" value="1"/>
</dbReference>
<dbReference type="PANTHER" id="PTHR32039:SF7">
    <property type="entry name" value="COMPETENCE PROTEIN COMM"/>
    <property type="match status" value="1"/>
</dbReference>
<dbReference type="PANTHER" id="PTHR32039">
    <property type="entry name" value="MAGNESIUM-CHELATASE SUBUNIT CHLI"/>
    <property type="match status" value="1"/>
</dbReference>
<dbReference type="Pfam" id="PF13541">
    <property type="entry name" value="ChlI"/>
    <property type="match status" value="1"/>
</dbReference>
<dbReference type="Pfam" id="PF01078">
    <property type="entry name" value="Mg_chelatase"/>
    <property type="match status" value="1"/>
</dbReference>
<dbReference type="Pfam" id="PF13335">
    <property type="entry name" value="Mg_chelatase_C"/>
    <property type="match status" value="1"/>
</dbReference>
<dbReference type="SMART" id="SM00382">
    <property type="entry name" value="AAA"/>
    <property type="match status" value="1"/>
</dbReference>
<dbReference type="SUPFAM" id="SSF52540">
    <property type="entry name" value="P-loop containing nucleoside triphosphate hydrolases"/>
    <property type="match status" value="1"/>
</dbReference>
<dbReference type="SUPFAM" id="SSF54211">
    <property type="entry name" value="Ribosomal protein S5 domain 2-like"/>
    <property type="match status" value="1"/>
</dbReference>
<accession>P68908</accession>
<accession>A0A1R3Y2H9</accession>
<accession>Q10818</accession>
<accession>X2BM50</accession>
<organism>
    <name type="scientific">Mycobacterium bovis (strain ATCC BAA-935 / AF2122/97)</name>
    <dbReference type="NCBI Taxonomy" id="233413"/>
    <lineage>
        <taxon>Bacteria</taxon>
        <taxon>Bacillati</taxon>
        <taxon>Actinomycetota</taxon>
        <taxon>Actinomycetes</taxon>
        <taxon>Mycobacteriales</taxon>
        <taxon>Mycobacteriaceae</taxon>
        <taxon>Mycobacterium</taxon>
        <taxon>Mycobacterium tuberculosis complex</taxon>
    </lineage>
</organism>
<protein>
    <recommendedName>
        <fullName>Uncharacterized protein Mb2921c</fullName>
    </recommendedName>
</protein>
<proteinExistence type="inferred from homology"/>
<keyword id="KW-1185">Reference proteome</keyword>
<name>Y2921_MYCBO</name>
<feature type="chain" id="PRO_0000206879" description="Uncharacterized protein Mb2921c">
    <location>
        <begin position="1"/>
        <end position="503"/>
    </location>
</feature>
<evidence type="ECO:0000305" key="1"/>